<name>OPSX_MOUSE</name>
<gene>
    <name type="primary">Rrh</name>
</gene>
<sequence length="337" mass="37209">MLSEASDFNSSGSRSEGSVFSRTEHSVIAAYLIVAGITSILSNVVVLGIFIKYKELRTPTNAVIINLAFTDIGVSSIGYPMSAASDLHGSWKFGHAGCQIYAGLNIFFGMVSIGLLTVVAMDRYLTISCPDVGRRMTTNTYLSMILGAWINGLFWALMPIIGWASYAPDPTGATCTINWRNNDTSFVSYTMMVIVVNFIVPLTVMFYCYYHVSRSLRLYAASDCTAHLHRDWADQADVTKMSVIMILMFLLAWSPYSIVCLWACFGNPKKIPPSMAIIAPLFAKSSTFYNPCIYVAAHKKFRKAMLAMFKCQPHLAVPEPSTLPMDMPQSSLAPVRI</sequence>
<reference key="1">
    <citation type="journal article" date="1997" name="Proc. Natl. Acad. Sci. U.S.A.">
        <title>Peropsin, a novel visual pigment-like protein located in the apical microvilli of the retinal pigment epithelium.</title>
        <authorList>
            <person name="Sun H."/>
            <person name="Gilbert D.J."/>
            <person name="Copeland N.G."/>
            <person name="Jenkins N.A."/>
            <person name="Nathans J."/>
        </authorList>
    </citation>
    <scope>NUCLEOTIDE SEQUENCE [MRNA]</scope>
    <source>
        <tissue>Retina</tissue>
    </source>
</reference>
<comment type="function">
    <text>May play a role in rpe physiology either by detecting light directly or by monitoring the concentration of retinoids or other photoreceptor-derived compounds.</text>
</comment>
<comment type="subcellular location">
    <subcellularLocation>
        <location evidence="1">Membrane</location>
        <topology evidence="1">Multi-pass membrane protein</topology>
    </subcellularLocation>
</comment>
<comment type="tissue specificity">
    <text>Found only in the eye, where it is localized to the retinal pigment epithelium (RPE). In the RPE, it is localized to the microvilli that surround the photoreceptor outer segments.</text>
</comment>
<comment type="similarity">
    <text evidence="3">Belongs to the G-protein coupled receptor 1 family. Opsin subfamily.</text>
</comment>
<proteinExistence type="evidence at protein level"/>
<organism>
    <name type="scientific">Mus musculus</name>
    <name type="common">Mouse</name>
    <dbReference type="NCBI Taxonomy" id="10090"/>
    <lineage>
        <taxon>Eukaryota</taxon>
        <taxon>Metazoa</taxon>
        <taxon>Chordata</taxon>
        <taxon>Craniata</taxon>
        <taxon>Vertebrata</taxon>
        <taxon>Euteleostomi</taxon>
        <taxon>Mammalia</taxon>
        <taxon>Eutheria</taxon>
        <taxon>Euarchontoglires</taxon>
        <taxon>Glires</taxon>
        <taxon>Rodentia</taxon>
        <taxon>Myomorpha</taxon>
        <taxon>Muroidea</taxon>
        <taxon>Muridae</taxon>
        <taxon>Murinae</taxon>
        <taxon>Mus</taxon>
        <taxon>Mus</taxon>
    </lineage>
</organism>
<keyword id="KW-0157">Chromophore</keyword>
<keyword id="KW-1015">Disulfide bond</keyword>
<keyword id="KW-0297">G-protein coupled receptor</keyword>
<keyword id="KW-0325">Glycoprotein</keyword>
<keyword id="KW-0472">Membrane</keyword>
<keyword id="KW-0600">Photoreceptor protein</keyword>
<keyword id="KW-0675">Receptor</keyword>
<keyword id="KW-1185">Reference proteome</keyword>
<keyword id="KW-0681">Retinal protein</keyword>
<keyword id="KW-0716">Sensory transduction</keyword>
<keyword id="KW-0807">Transducer</keyword>
<keyword id="KW-0812">Transmembrane</keyword>
<keyword id="KW-1133">Transmembrane helix</keyword>
<accession>O35214</accession>
<feature type="chain" id="PRO_0000197820" description="Visual pigment-like receptor peropsin">
    <location>
        <begin position="1"/>
        <end position="337"/>
    </location>
</feature>
<feature type="topological domain" description="Extracellular">
    <location>
        <begin position="1"/>
        <end position="26"/>
    </location>
</feature>
<feature type="transmembrane region" description="Helical; Name=1" evidence="2">
    <location>
        <begin position="27"/>
        <end position="49"/>
    </location>
</feature>
<feature type="topological domain" description="Cytoplasmic">
    <location>
        <begin position="50"/>
        <end position="61"/>
    </location>
</feature>
<feature type="transmembrane region" description="Helical; Name=2" evidence="2">
    <location>
        <begin position="62"/>
        <end position="87"/>
    </location>
</feature>
<feature type="topological domain" description="Extracellular">
    <location>
        <begin position="88"/>
        <end position="101"/>
    </location>
</feature>
<feature type="transmembrane region" description="Helical; Name=3" evidence="2">
    <location>
        <begin position="102"/>
        <end position="121"/>
    </location>
</feature>
<feature type="topological domain" description="Cytoplasmic">
    <location>
        <begin position="122"/>
        <end position="140"/>
    </location>
</feature>
<feature type="transmembrane region" description="Helical; Name=4" evidence="2">
    <location>
        <begin position="141"/>
        <end position="164"/>
    </location>
</feature>
<feature type="topological domain" description="Extracellular">
    <location>
        <begin position="165"/>
        <end position="188"/>
    </location>
</feature>
<feature type="transmembrane region" description="Helical; Name=5" evidence="2">
    <location>
        <begin position="189"/>
        <end position="212"/>
    </location>
</feature>
<feature type="topological domain" description="Cytoplasmic">
    <location>
        <begin position="213"/>
        <end position="240"/>
    </location>
</feature>
<feature type="transmembrane region" description="Helical; Name=6" evidence="2">
    <location>
        <begin position="241"/>
        <end position="264"/>
    </location>
</feature>
<feature type="topological domain" description="Extracellular">
    <location>
        <begin position="265"/>
        <end position="272"/>
    </location>
</feature>
<feature type="transmembrane region" description="Helical; Name=7" evidence="2">
    <location>
        <begin position="273"/>
        <end position="297"/>
    </location>
</feature>
<feature type="topological domain" description="Cytoplasmic">
    <location>
        <begin position="298"/>
        <end position="337"/>
    </location>
</feature>
<feature type="modified residue" description="N6-(retinylidene)lysine">
    <location>
        <position position="284"/>
    </location>
</feature>
<feature type="glycosylation site" description="N-linked (GlcNAc...) asparagine" evidence="2">
    <location>
        <position position="9"/>
    </location>
</feature>
<feature type="glycosylation site" description="N-linked (GlcNAc...) asparagine" evidence="2">
    <location>
        <position position="182"/>
    </location>
</feature>
<feature type="disulfide bond" evidence="3">
    <location>
        <begin position="98"/>
        <end position="175"/>
    </location>
</feature>
<evidence type="ECO:0000250" key="1"/>
<evidence type="ECO:0000255" key="2"/>
<evidence type="ECO:0000255" key="3">
    <source>
        <dbReference type="PROSITE-ProRule" id="PRU00521"/>
    </source>
</evidence>
<dbReference type="EMBL" id="AF012271">
    <property type="protein sequence ID" value="AAC53344.1"/>
    <property type="molecule type" value="mRNA"/>
</dbReference>
<dbReference type="CCDS" id="CCDS38633.1"/>
<dbReference type="RefSeq" id="NP_033128.1">
    <property type="nucleotide sequence ID" value="NM_009102.4"/>
</dbReference>
<dbReference type="SMR" id="O35214"/>
<dbReference type="BioGRID" id="203021">
    <property type="interactions" value="2"/>
</dbReference>
<dbReference type="FunCoup" id="O35214">
    <property type="interactions" value="83"/>
</dbReference>
<dbReference type="STRING" id="10090.ENSMUSP00000132360"/>
<dbReference type="GlyCosmos" id="O35214">
    <property type="glycosylation" value="2 sites, No reported glycans"/>
</dbReference>
<dbReference type="GlyGen" id="O35214">
    <property type="glycosylation" value="3 sites"/>
</dbReference>
<dbReference type="iPTMnet" id="O35214"/>
<dbReference type="PhosphoSitePlus" id="O35214"/>
<dbReference type="PaxDb" id="10090-ENSMUSP00000132360"/>
<dbReference type="ProteomicsDB" id="294221"/>
<dbReference type="Antibodypedia" id="15375">
    <property type="antibodies" value="146 antibodies from 26 providers"/>
</dbReference>
<dbReference type="DNASU" id="20132"/>
<dbReference type="Ensembl" id="ENSMUST00000171313.8">
    <property type="protein sequence ID" value="ENSMUSP00000132360.2"/>
    <property type="gene ID" value="ENSMUSG00000028012.16"/>
</dbReference>
<dbReference type="Ensembl" id="ENSMUST00000196902.5">
    <property type="protein sequence ID" value="ENSMUSP00000143093.2"/>
    <property type="gene ID" value="ENSMUSG00000028012.16"/>
</dbReference>
<dbReference type="GeneID" id="20132"/>
<dbReference type="KEGG" id="mmu:20132"/>
<dbReference type="UCSC" id="uc008ril.1">
    <property type="organism name" value="mouse"/>
</dbReference>
<dbReference type="AGR" id="MGI:1097709"/>
<dbReference type="CTD" id="10692"/>
<dbReference type="MGI" id="MGI:1097709">
    <property type="gene designation" value="Rrh"/>
</dbReference>
<dbReference type="VEuPathDB" id="HostDB:ENSMUSG00000028012"/>
<dbReference type="eggNOG" id="KOG3656">
    <property type="taxonomic scope" value="Eukaryota"/>
</dbReference>
<dbReference type="GeneTree" id="ENSGT01120000271854"/>
<dbReference type="HOGENOM" id="CLU_009579_3_0_1"/>
<dbReference type="InParanoid" id="O35214"/>
<dbReference type="OMA" id="MHWNDSS"/>
<dbReference type="OrthoDB" id="2105199at2759"/>
<dbReference type="PhylomeDB" id="O35214"/>
<dbReference type="TreeFam" id="TF324998"/>
<dbReference type="Reactome" id="R-MMU-418594">
    <property type="pathway name" value="G alpha (i) signalling events"/>
</dbReference>
<dbReference type="Reactome" id="R-MMU-419771">
    <property type="pathway name" value="Opsins"/>
</dbReference>
<dbReference type="BioGRID-ORCS" id="20132">
    <property type="hits" value="2 hits in 79 CRISPR screens"/>
</dbReference>
<dbReference type="PRO" id="PR:O35214"/>
<dbReference type="Proteomes" id="UP000000589">
    <property type="component" value="Chromosome 3"/>
</dbReference>
<dbReference type="RNAct" id="O35214">
    <property type="molecule type" value="protein"/>
</dbReference>
<dbReference type="Bgee" id="ENSMUSG00000028012">
    <property type="expression patterns" value="Expressed in pigmented layer of retina and 28 other cell types or tissues"/>
</dbReference>
<dbReference type="ExpressionAtlas" id="O35214">
    <property type="expression patterns" value="baseline and differential"/>
</dbReference>
<dbReference type="GO" id="GO:0016020">
    <property type="term" value="C:membrane"/>
    <property type="evidence" value="ECO:0007669"/>
    <property type="project" value="UniProtKB-SubCell"/>
</dbReference>
<dbReference type="GO" id="GO:0004930">
    <property type="term" value="F:G protein-coupled receptor activity"/>
    <property type="evidence" value="ECO:0007669"/>
    <property type="project" value="UniProtKB-KW"/>
</dbReference>
<dbReference type="GO" id="GO:0009881">
    <property type="term" value="F:photoreceptor activity"/>
    <property type="evidence" value="ECO:0007669"/>
    <property type="project" value="UniProtKB-KW"/>
</dbReference>
<dbReference type="GO" id="GO:0007602">
    <property type="term" value="P:phototransduction"/>
    <property type="evidence" value="ECO:0007669"/>
    <property type="project" value="UniProtKB-KW"/>
</dbReference>
<dbReference type="GO" id="GO:0007601">
    <property type="term" value="P:visual perception"/>
    <property type="evidence" value="ECO:0007669"/>
    <property type="project" value="InterPro"/>
</dbReference>
<dbReference type="CDD" id="cd15073">
    <property type="entry name" value="7tmA_Peropsin"/>
    <property type="match status" value="1"/>
</dbReference>
<dbReference type="FunFam" id="1.20.1070.10:FF:000169">
    <property type="entry name" value="Retinal pigment epithelium-derived rhodopsin homolog"/>
    <property type="match status" value="1"/>
</dbReference>
<dbReference type="Gene3D" id="1.20.1070.10">
    <property type="entry name" value="Rhodopsin 7-helix transmembrane proteins"/>
    <property type="match status" value="1"/>
</dbReference>
<dbReference type="InterPro" id="IPR050125">
    <property type="entry name" value="GPCR_opsins"/>
</dbReference>
<dbReference type="InterPro" id="IPR000276">
    <property type="entry name" value="GPCR_Rhodpsn"/>
</dbReference>
<dbReference type="InterPro" id="IPR017452">
    <property type="entry name" value="GPCR_Rhodpsn_7TM"/>
</dbReference>
<dbReference type="InterPro" id="IPR002962">
    <property type="entry name" value="Peropsin"/>
</dbReference>
<dbReference type="InterPro" id="IPR027430">
    <property type="entry name" value="Retinal_BS"/>
</dbReference>
<dbReference type="PANTHER" id="PTHR24240">
    <property type="entry name" value="OPSIN"/>
    <property type="match status" value="1"/>
</dbReference>
<dbReference type="Pfam" id="PF00001">
    <property type="entry name" value="7tm_1"/>
    <property type="match status" value="1"/>
</dbReference>
<dbReference type="PRINTS" id="PR00237">
    <property type="entry name" value="GPCRRHODOPSN"/>
</dbReference>
<dbReference type="PRINTS" id="PR01244">
    <property type="entry name" value="PEROPSIN"/>
</dbReference>
<dbReference type="SUPFAM" id="SSF81321">
    <property type="entry name" value="Family A G protein-coupled receptor-like"/>
    <property type="match status" value="1"/>
</dbReference>
<dbReference type="PROSITE" id="PS00237">
    <property type="entry name" value="G_PROTEIN_RECEP_F1_1"/>
    <property type="match status" value="1"/>
</dbReference>
<dbReference type="PROSITE" id="PS50262">
    <property type="entry name" value="G_PROTEIN_RECEP_F1_2"/>
    <property type="match status" value="1"/>
</dbReference>
<dbReference type="PROSITE" id="PS00238">
    <property type="entry name" value="OPSIN"/>
    <property type="match status" value="1"/>
</dbReference>
<protein>
    <recommendedName>
        <fullName>Visual pigment-like receptor peropsin</fullName>
    </recommendedName>
</protein>